<sequence>MAKPEGGAEPKVASPERVAAFRTGISAESRAAAYLMAKGYRILAKRYRTPHGEIDIVARRRNLIAFVEVKARASLDDAAYAVTPRQQQRIIDAAQGWLAAHPEHAEFELRFDAMLIAPRSLPRHVLAAFDAST</sequence>
<comment type="similarity">
    <text evidence="1">Belongs to the UPF0102 family.</text>
</comment>
<organism>
    <name type="scientific">Bradyrhizobium diazoefficiens (strain JCM 10833 / BCRC 13528 / IAM 13628 / NBRC 14792 / USDA 110)</name>
    <dbReference type="NCBI Taxonomy" id="224911"/>
    <lineage>
        <taxon>Bacteria</taxon>
        <taxon>Pseudomonadati</taxon>
        <taxon>Pseudomonadota</taxon>
        <taxon>Alphaproteobacteria</taxon>
        <taxon>Hyphomicrobiales</taxon>
        <taxon>Nitrobacteraceae</taxon>
        <taxon>Bradyrhizobium</taxon>
    </lineage>
</organism>
<gene>
    <name type="ordered locus">bll0669</name>
</gene>
<evidence type="ECO:0000255" key="1">
    <source>
        <dbReference type="HAMAP-Rule" id="MF_00048"/>
    </source>
</evidence>
<feature type="chain" id="PRO_0000167335" description="UPF0102 protein bll0669">
    <location>
        <begin position="1"/>
        <end position="133"/>
    </location>
</feature>
<proteinExistence type="inferred from homology"/>
<keyword id="KW-1185">Reference proteome</keyword>
<reference key="1">
    <citation type="journal article" date="2002" name="DNA Res.">
        <title>Complete genomic sequence of nitrogen-fixing symbiotic bacterium Bradyrhizobium japonicum USDA110.</title>
        <authorList>
            <person name="Kaneko T."/>
            <person name="Nakamura Y."/>
            <person name="Sato S."/>
            <person name="Minamisawa K."/>
            <person name="Uchiumi T."/>
            <person name="Sasamoto S."/>
            <person name="Watanabe A."/>
            <person name="Idesawa K."/>
            <person name="Iriguchi M."/>
            <person name="Kawashima K."/>
            <person name="Kohara M."/>
            <person name="Matsumoto M."/>
            <person name="Shimpo S."/>
            <person name="Tsuruoka H."/>
            <person name="Wada T."/>
            <person name="Yamada M."/>
            <person name="Tabata S."/>
        </authorList>
    </citation>
    <scope>NUCLEOTIDE SEQUENCE [LARGE SCALE GENOMIC DNA]</scope>
    <source>
        <strain>JCM 10833 / BCRC 13528 / IAM 13628 / NBRC 14792 / USDA 110</strain>
    </source>
</reference>
<accession>Q89WK9</accession>
<protein>
    <recommendedName>
        <fullName evidence="1">UPF0102 protein bll0669</fullName>
    </recommendedName>
</protein>
<name>Y669_BRADU</name>
<dbReference type="EMBL" id="BA000040">
    <property type="protein sequence ID" value="BAC45934.1"/>
    <property type="molecule type" value="Genomic_DNA"/>
</dbReference>
<dbReference type="RefSeq" id="NP_767309.1">
    <property type="nucleotide sequence ID" value="NC_004463.1"/>
</dbReference>
<dbReference type="RefSeq" id="WP_011083496.1">
    <property type="nucleotide sequence ID" value="NC_004463.1"/>
</dbReference>
<dbReference type="SMR" id="Q89WK9"/>
<dbReference type="STRING" id="224911.AAV28_00180"/>
<dbReference type="EnsemblBacteria" id="BAC45934">
    <property type="protein sequence ID" value="BAC45934"/>
    <property type="gene ID" value="BAC45934"/>
</dbReference>
<dbReference type="GeneID" id="46487942"/>
<dbReference type="KEGG" id="bja:bll0669"/>
<dbReference type="PATRIC" id="fig|224911.44.peg.38"/>
<dbReference type="eggNOG" id="COG0792">
    <property type="taxonomic scope" value="Bacteria"/>
</dbReference>
<dbReference type="HOGENOM" id="CLU_115353_0_2_5"/>
<dbReference type="InParanoid" id="Q89WK9"/>
<dbReference type="OrthoDB" id="9812968at2"/>
<dbReference type="PhylomeDB" id="Q89WK9"/>
<dbReference type="Proteomes" id="UP000002526">
    <property type="component" value="Chromosome"/>
</dbReference>
<dbReference type="GO" id="GO:0003676">
    <property type="term" value="F:nucleic acid binding"/>
    <property type="evidence" value="ECO:0007669"/>
    <property type="project" value="InterPro"/>
</dbReference>
<dbReference type="CDD" id="cd20736">
    <property type="entry name" value="PoNe_Nuclease"/>
    <property type="match status" value="1"/>
</dbReference>
<dbReference type="Gene3D" id="3.40.1350.10">
    <property type="match status" value="1"/>
</dbReference>
<dbReference type="HAMAP" id="MF_00048">
    <property type="entry name" value="UPF0102"/>
    <property type="match status" value="1"/>
</dbReference>
<dbReference type="InterPro" id="IPR011335">
    <property type="entry name" value="Restrct_endonuc-II-like"/>
</dbReference>
<dbReference type="InterPro" id="IPR011856">
    <property type="entry name" value="tRNA_endonuc-like_dom_sf"/>
</dbReference>
<dbReference type="InterPro" id="IPR003509">
    <property type="entry name" value="UPF0102_YraN-like"/>
</dbReference>
<dbReference type="NCBIfam" id="NF009151">
    <property type="entry name" value="PRK12497.1-5"/>
    <property type="match status" value="1"/>
</dbReference>
<dbReference type="NCBIfam" id="TIGR00252">
    <property type="entry name" value="YraN family protein"/>
    <property type="match status" value="1"/>
</dbReference>
<dbReference type="PANTHER" id="PTHR34039">
    <property type="entry name" value="UPF0102 PROTEIN YRAN"/>
    <property type="match status" value="1"/>
</dbReference>
<dbReference type="PANTHER" id="PTHR34039:SF1">
    <property type="entry name" value="UPF0102 PROTEIN YRAN"/>
    <property type="match status" value="1"/>
</dbReference>
<dbReference type="Pfam" id="PF02021">
    <property type="entry name" value="UPF0102"/>
    <property type="match status" value="1"/>
</dbReference>
<dbReference type="SUPFAM" id="SSF52980">
    <property type="entry name" value="Restriction endonuclease-like"/>
    <property type="match status" value="1"/>
</dbReference>